<keyword id="KW-0002">3D-structure</keyword>
<keyword id="KW-0010">Activator</keyword>
<keyword id="KW-0238">DNA-binding</keyword>
<keyword id="KW-1185">Reference proteome</keyword>
<keyword id="KW-0804">Transcription</keyword>
<keyword id="KW-0805">Transcription regulation</keyword>
<dbReference type="EMBL" id="U18997">
    <property type="protein sequence ID" value="AAA57909.1"/>
    <property type="molecule type" value="Genomic_DNA"/>
</dbReference>
<dbReference type="EMBL" id="U00096">
    <property type="protein sequence ID" value="AAC76140.1"/>
    <property type="molecule type" value="Genomic_DNA"/>
</dbReference>
<dbReference type="EMBL" id="AP009048">
    <property type="protein sequence ID" value="BAE77155.1"/>
    <property type="molecule type" value="Genomic_DNA"/>
</dbReference>
<dbReference type="PIR" id="F65099">
    <property type="entry name" value="F65099"/>
</dbReference>
<dbReference type="RefSeq" id="NP_417576.1">
    <property type="nucleotide sequence ID" value="NC_000913.3"/>
</dbReference>
<dbReference type="RefSeq" id="WP_001041009.1">
    <property type="nucleotide sequence ID" value="NZ_LN832404.1"/>
</dbReference>
<dbReference type="PDB" id="8H58">
    <property type="method" value="X-ray"/>
    <property type="resolution" value="2.64 A"/>
    <property type="chains" value="A/B/C/D/E/F/G/H/I/J/K/L/M/N/O/P=96-298"/>
</dbReference>
<dbReference type="PDB" id="8H5A">
    <property type="method" value="X-ray"/>
    <property type="resolution" value="2.80 A"/>
    <property type="chains" value="A/B/C/D/E/F/G/H/I/J/K/L/M/N/O/P=96-298"/>
</dbReference>
<dbReference type="PDB" id="9IRZ">
    <property type="method" value="X-ray"/>
    <property type="resolution" value="1.76 A"/>
    <property type="chains" value="A/B=1-93"/>
</dbReference>
<dbReference type="PDBsum" id="8H58"/>
<dbReference type="PDBsum" id="8H5A"/>
<dbReference type="PDBsum" id="9IRZ"/>
<dbReference type="SMR" id="P67660"/>
<dbReference type="BioGRID" id="4259259">
    <property type="interactions" value="97"/>
</dbReference>
<dbReference type="BioGRID" id="851937">
    <property type="interactions" value="3"/>
</dbReference>
<dbReference type="DIP" id="DIP-35869N"/>
<dbReference type="FunCoup" id="P67660">
    <property type="interactions" value="142"/>
</dbReference>
<dbReference type="IntAct" id="P67660">
    <property type="interactions" value="13"/>
</dbReference>
<dbReference type="STRING" id="511145.b3105"/>
<dbReference type="jPOST" id="P67660"/>
<dbReference type="PaxDb" id="511145-b3105"/>
<dbReference type="DNASU" id="947621"/>
<dbReference type="EnsemblBacteria" id="AAC76140">
    <property type="protein sequence ID" value="AAC76140"/>
    <property type="gene ID" value="b3105"/>
</dbReference>
<dbReference type="GeneID" id="75173279"/>
<dbReference type="GeneID" id="947621"/>
<dbReference type="KEGG" id="ecj:JW3076"/>
<dbReference type="KEGG" id="eco:b3105"/>
<dbReference type="KEGG" id="ecoc:C3026_16950"/>
<dbReference type="PATRIC" id="fig|511145.12.peg.3201"/>
<dbReference type="EchoBASE" id="EB2605"/>
<dbReference type="eggNOG" id="COG0583">
    <property type="taxonomic scope" value="Bacteria"/>
</dbReference>
<dbReference type="HOGENOM" id="CLU_039613_35_1_6"/>
<dbReference type="InParanoid" id="P67660"/>
<dbReference type="OMA" id="NIIMAWR"/>
<dbReference type="OrthoDB" id="196624at2"/>
<dbReference type="PhylomeDB" id="P67660"/>
<dbReference type="BioCyc" id="EcoCyc:G7619-MONOMER"/>
<dbReference type="PRO" id="PR:P67660"/>
<dbReference type="Proteomes" id="UP000000625">
    <property type="component" value="Chromosome"/>
</dbReference>
<dbReference type="GO" id="GO:0001216">
    <property type="term" value="F:DNA-binding transcription activator activity"/>
    <property type="evidence" value="ECO:0000314"/>
    <property type="project" value="EcoCyc"/>
</dbReference>
<dbReference type="GO" id="GO:0000976">
    <property type="term" value="F:transcription cis-regulatory region binding"/>
    <property type="evidence" value="ECO:0000318"/>
    <property type="project" value="GO_Central"/>
</dbReference>
<dbReference type="GO" id="GO:2000144">
    <property type="term" value="P:positive regulation of DNA-templated transcription initiation"/>
    <property type="evidence" value="ECO:0000314"/>
    <property type="project" value="EcoCyc"/>
</dbReference>
<dbReference type="GO" id="GO:0006355">
    <property type="term" value="P:regulation of DNA-templated transcription"/>
    <property type="evidence" value="ECO:0000318"/>
    <property type="project" value="GO_Central"/>
</dbReference>
<dbReference type="FunFam" id="1.10.10.10:FF:000063">
    <property type="entry name" value="LysR family transcriptional regulator"/>
    <property type="match status" value="1"/>
</dbReference>
<dbReference type="FunFam" id="3.40.190.290:FF:000004">
    <property type="entry name" value="LysR family transcriptional regulator"/>
    <property type="match status" value="1"/>
</dbReference>
<dbReference type="Gene3D" id="3.40.190.290">
    <property type="match status" value="1"/>
</dbReference>
<dbReference type="Gene3D" id="1.10.10.10">
    <property type="entry name" value="Winged helix-like DNA-binding domain superfamily/Winged helix DNA-binding domain"/>
    <property type="match status" value="1"/>
</dbReference>
<dbReference type="InterPro" id="IPR005119">
    <property type="entry name" value="LysR_subst-bd"/>
</dbReference>
<dbReference type="InterPro" id="IPR000847">
    <property type="entry name" value="Tscrpt_reg_HTH_LysR"/>
</dbReference>
<dbReference type="InterPro" id="IPR036388">
    <property type="entry name" value="WH-like_DNA-bd_sf"/>
</dbReference>
<dbReference type="InterPro" id="IPR036390">
    <property type="entry name" value="WH_DNA-bd_sf"/>
</dbReference>
<dbReference type="PANTHER" id="PTHR30126">
    <property type="entry name" value="HTH-TYPE TRANSCRIPTIONAL REGULATOR"/>
    <property type="match status" value="1"/>
</dbReference>
<dbReference type="PANTHER" id="PTHR30126:SF22">
    <property type="entry name" value="HTH-TYPE TRANSCRIPTIONAL REGULATOR YHAJ-RELATED"/>
    <property type="match status" value="1"/>
</dbReference>
<dbReference type="Pfam" id="PF00126">
    <property type="entry name" value="HTH_1"/>
    <property type="match status" value="1"/>
</dbReference>
<dbReference type="Pfam" id="PF03466">
    <property type="entry name" value="LysR_substrate"/>
    <property type="match status" value="1"/>
</dbReference>
<dbReference type="SUPFAM" id="SSF53850">
    <property type="entry name" value="Periplasmic binding protein-like II"/>
    <property type="match status" value="1"/>
</dbReference>
<dbReference type="SUPFAM" id="SSF46785">
    <property type="entry name" value="Winged helix' DNA-binding domain"/>
    <property type="match status" value="1"/>
</dbReference>
<dbReference type="PROSITE" id="PS50931">
    <property type="entry name" value="HTH_LYSR"/>
    <property type="match status" value="1"/>
</dbReference>
<feature type="chain" id="PRO_0000105796" description="Probable HTH-type transcriptional regulator YhaJ">
    <location>
        <begin position="1"/>
        <end position="298"/>
    </location>
</feature>
<feature type="domain" description="HTH lysR-type" evidence="2">
    <location>
        <begin position="7"/>
        <end position="64"/>
    </location>
</feature>
<feature type="DNA-binding region" description="H-T-H motif" evidence="2">
    <location>
        <begin position="24"/>
        <end position="43"/>
    </location>
</feature>
<feature type="strand" evidence="4">
    <location>
        <begin position="98"/>
        <end position="104"/>
    </location>
</feature>
<feature type="helix" evidence="4">
    <location>
        <begin position="109"/>
        <end position="114"/>
    </location>
</feature>
<feature type="helix" evidence="4">
    <location>
        <begin position="115"/>
        <end position="122"/>
    </location>
</feature>
<feature type="strand" evidence="4">
    <location>
        <begin position="126"/>
        <end position="132"/>
    </location>
</feature>
<feature type="helix" evidence="4">
    <location>
        <begin position="135"/>
        <end position="142"/>
    </location>
</feature>
<feature type="strand" evidence="4">
    <location>
        <begin position="147"/>
        <end position="152"/>
    </location>
</feature>
<feature type="helix" evidence="4">
    <location>
        <begin position="157"/>
        <end position="159"/>
    </location>
</feature>
<feature type="strand" evidence="4">
    <location>
        <begin position="160"/>
        <end position="176"/>
    </location>
</feature>
<feature type="helix" evidence="4">
    <location>
        <begin position="181"/>
        <end position="184"/>
    </location>
</feature>
<feature type="helix" evidence="4">
    <location>
        <begin position="191"/>
        <end position="194"/>
    </location>
</feature>
<feature type="strand" evidence="4">
    <location>
        <begin position="199"/>
        <end position="202"/>
    </location>
</feature>
<feature type="strand" evidence="5">
    <location>
        <begin position="218"/>
        <end position="220"/>
    </location>
</feature>
<feature type="strand" evidence="4">
    <location>
        <begin position="222"/>
        <end position="227"/>
    </location>
</feature>
<feature type="helix" evidence="4">
    <location>
        <begin position="228"/>
        <end position="236"/>
    </location>
</feature>
<feature type="strand" evidence="4">
    <location>
        <begin position="241"/>
        <end position="245"/>
    </location>
</feature>
<feature type="helix" evidence="4">
    <location>
        <begin position="246"/>
        <end position="254"/>
    </location>
</feature>
<feature type="strand" evidence="4">
    <location>
        <begin position="259"/>
        <end position="261"/>
    </location>
</feature>
<feature type="helix" evidence="4">
    <location>
        <begin position="263"/>
        <end position="265"/>
    </location>
</feature>
<feature type="strand" evidence="4">
    <location>
        <begin position="267"/>
        <end position="276"/>
    </location>
</feature>
<feature type="helix" evidence="4">
    <location>
        <begin position="282"/>
        <end position="290"/>
    </location>
</feature>
<feature type="helix" evidence="4">
    <location>
        <begin position="291"/>
        <end position="295"/>
    </location>
</feature>
<reference key="1">
    <citation type="journal article" date="1997" name="Science">
        <title>The complete genome sequence of Escherichia coli K-12.</title>
        <authorList>
            <person name="Blattner F.R."/>
            <person name="Plunkett G. III"/>
            <person name="Bloch C.A."/>
            <person name="Perna N.T."/>
            <person name="Burland V."/>
            <person name="Riley M."/>
            <person name="Collado-Vides J."/>
            <person name="Glasner J.D."/>
            <person name="Rode C.K."/>
            <person name="Mayhew G.F."/>
            <person name="Gregor J."/>
            <person name="Davis N.W."/>
            <person name="Kirkpatrick H.A."/>
            <person name="Goeden M.A."/>
            <person name="Rose D.J."/>
            <person name="Mau B."/>
            <person name="Shao Y."/>
        </authorList>
    </citation>
    <scope>NUCLEOTIDE SEQUENCE [LARGE SCALE GENOMIC DNA]</scope>
    <source>
        <strain>K12 / MG1655 / ATCC 47076</strain>
    </source>
</reference>
<reference key="2">
    <citation type="journal article" date="2006" name="Mol. Syst. Biol.">
        <title>Highly accurate genome sequences of Escherichia coli K-12 strains MG1655 and W3110.</title>
        <authorList>
            <person name="Hayashi K."/>
            <person name="Morooka N."/>
            <person name="Yamamoto Y."/>
            <person name="Fujita K."/>
            <person name="Isono K."/>
            <person name="Choi S."/>
            <person name="Ohtsubo E."/>
            <person name="Baba T."/>
            <person name="Wanner B.L."/>
            <person name="Mori H."/>
            <person name="Horiuchi T."/>
        </authorList>
    </citation>
    <scope>NUCLEOTIDE SEQUENCE [LARGE SCALE GENOMIC DNA]</scope>
    <source>
        <strain>K12 / W3110 / ATCC 27325 / DSM 5911</strain>
    </source>
</reference>
<gene>
    <name type="primary">yhaJ</name>
    <name type="ordered locus">b3105</name>
    <name type="ordered locus">JW3076</name>
</gene>
<evidence type="ECO:0000250" key="1">
    <source>
        <dbReference type="UniProtKB" id="P67661"/>
    </source>
</evidence>
<evidence type="ECO:0000255" key="2">
    <source>
        <dbReference type="PROSITE-ProRule" id="PRU00253"/>
    </source>
</evidence>
<evidence type="ECO:0000305" key="3"/>
<evidence type="ECO:0007829" key="4">
    <source>
        <dbReference type="PDB" id="8H58"/>
    </source>
</evidence>
<evidence type="ECO:0007829" key="5">
    <source>
        <dbReference type="PDB" id="8H5A"/>
    </source>
</evidence>
<sequence length="298" mass="33256">MAKERALTLEALRVMDAIDRRGSFAAAADELGRVPSALSYTMQKLEEELDVVLFDRSGHRTKFTNVGRMLLERGRVLLEAADKLTTDAEALARGWETHLTIVTEALVPTPAFFPLIDKLAAKANTQLAIITEVLAGAWERLEQGRADIVIAPDMHFRSSSEINSRKLYTLMNVYVAAPDHPIHQEPEPLSEVTRVKYRGIAVADTARERPVLTVQLLDKQPRLTVSTIEDKRQALLAGLGVATMPYPMVEKDIAEGRLRVVSPESTSEIDIIMAWRRDSMGEAKSWCLREIPKLFNGK</sequence>
<accession>P67660</accession>
<accession>P42623</accession>
<accession>Q2M9A1</accession>
<name>YHAJ_ECOLI</name>
<protein>
    <recommendedName>
        <fullName>Probable HTH-type transcriptional regulator YhaJ</fullName>
    </recommendedName>
</protein>
<proteinExistence type="evidence at protein level"/>
<organism>
    <name type="scientific">Escherichia coli (strain K12)</name>
    <dbReference type="NCBI Taxonomy" id="83333"/>
    <lineage>
        <taxon>Bacteria</taxon>
        <taxon>Pseudomonadati</taxon>
        <taxon>Pseudomonadota</taxon>
        <taxon>Gammaproteobacteria</taxon>
        <taxon>Enterobacterales</taxon>
        <taxon>Enterobacteriaceae</taxon>
        <taxon>Escherichia</taxon>
    </lineage>
</organism>
<comment type="function">
    <text evidence="1">Positive regulator, may be partially responsible for expression of neighboring gene dlsT (yhaO) (By similarity).</text>
</comment>
<comment type="similarity">
    <text evidence="3">Belongs to the LysR transcriptional regulatory family.</text>
</comment>